<accession>Q58429</accession>
<sequence length="262" mass="30316">MKPKIKVENLTKYFGDKKVLDEISFEVYEGEIFGLLGHNGAGKTTTLRILAGIIEEYTGYVEVNGKIGYLPEERGLYRDEKVVDVLKFFGELAGMKKEEIAKSIDYWLNKLKISNYKYSKIKELSKGNQQKVQFIVSVIHNPDIVILDEPFSGLDVVNVRLLRDIIFELKEEGKTIILSTHQLEKIERLCDRVLILKKGKAVHYGKIEDICRKMAYIEYLDNGKLIKKEIPYEEAVLILKEKAEDVIKFEVRYSLEDLFLDE</sequence>
<evidence type="ECO:0000255" key="1">
    <source>
        <dbReference type="PROSITE-ProRule" id="PRU00434"/>
    </source>
</evidence>
<evidence type="ECO:0000305" key="2"/>
<gene>
    <name type="ordered locus">MJ1023</name>
</gene>
<dbReference type="EMBL" id="L77117">
    <property type="protein sequence ID" value="AAB99027.1"/>
    <property type="molecule type" value="Genomic_DNA"/>
</dbReference>
<dbReference type="PIR" id="F64427">
    <property type="entry name" value="F64427"/>
</dbReference>
<dbReference type="RefSeq" id="WP_010870536.1">
    <property type="nucleotide sequence ID" value="NC_000909.1"/>
</dbReference>
<dbReference type="SMR" id="Q58429"/>
<dbReference type="FunCoup" id="Q58429">
    <property type="interactions" value="16"/>
</dbReference>
<dbReference type="STRING" id="243232.MJ_1023"/>
<dbReference type="PaxDb" id="243232-MJ_1023"/>
<dbReference type="EnsemblBacteria" id="AAB99027">
    <property type="protein sequence ID" value="AAB99027"/>
    <property type="gene ID" value="MJ_1023"/>
</dbReference>
<dbReference type="GeneID" id="1451920"/>
<dbReference type="KEGG" id="mja:MJ_1023"/>
<dbReference type="eggNOG" id="arCOG00194">
    <property type="taxonomic scope" value="Archaea"/>
</dbReference>
<dbReference type="HOGENOM" id="CLU_000604_1_2_2"/>
<dbReference type="InParanoid" id="Q58429"/>
<dbReference type="OrthoDB" id="31298at2157"/>
<dbReference type="PhylomeDB" id="Q58429"/>
<dbReference type="Proteomes" id="UP000000805">
    <property type="component" value="Chromosome"/>
</dbReference>
<dbReference type="GO" id="GO:0005524">
    <property type="term" value="F:ATP binding"/>
    <property type="evidence" value="ECO:0007669"/>
    <property type="project" value="UniProtKB-KW"/>
</dbReference>
<dbReference type="GO" id="GO:0016887">
    <property type="term" value="F:ATP hydrolysis activity"/>
    <property type="evidence" value="ECO:0007669"/>
    <property type="project" value="InterPro"/>
</dbReference>
<dbReference type="CDD" id="cd03269">
    <property type="entry name" value="ABC_putative_ATPase"/>
    <property type="match status" value="1"/>
</dbReference>
<dbReference type="Gene3D" id="3.40.50.300">
    <property type="entry name" value="P-loop containing nucleotide triphosphate hydrolases"/>
    <property type="match status" value="1"/>
</dbReference>
<dbReference type="InterPro" id="IPR003593">
    <property type="entry name" value="AAA+_ATPase"/>
</dbReference>
<dbReference type="InterPro" id="IPR003439">
    <property type="entry name" value="ABC_transporter-like_ATP-bd"/>
</dbReference>
<dbReference type="InterPro" id="IPR017871">
    <property type="entry name" value="ABC_transporter-like_CS"/>
</dbReference>
<dbReference type="InterPro" id="IPR050763">
    <property type="entry name" value="ABC_transporter_ATP-binding"/>
</dbReference>
<dbReference type="InterPro" id="IPR027417">
    <property type="entry name" value="P-loop_NTPase"/>
</dbReference>
<dbReference type="PANTHER" id="PTHR42711">
    <property type="entry name" value="ABC TRANSPORTER ATP-BINDING PROTEIN"/>
    <property type="match status" value="1"/>
</dbReference>
<dbReference type="PANTHER" id="PTHR42711:SF5">
    <property type="entry name" value="ABC TRANSPORTER ATP-BINDING PROTEIN NATA"/>
    <property type="match status" value="1"/>
</dbReference>
<dbReference type="Pfam" id="PF00005">
    <property type="entry name" value="ABC_tran"/>
    <property type="match status" value="1"/>
</dbReference>
<dbReference type="SMART" id="SM00382">
    <property type="entry name" value="AAA"/>
    <property type="match status" value="1"/>
</dbReference>
<dbReference type="SUPFAM" id="SSF52540">
    <property type="entry name" value="P-loop containing nucleoside triphosphate hydrolases"/>
    <property type="match status" value="1"/>
</dbReference>
<dbReference type="PROSITE" id="PS00211">
    <property type="entry name" value="ABC_TRANSPORTER_1"/>
    <property type="match status" value="1"/>
</dbReference>
<dbReference type="PROSITE" id="PS50893">
    <property type="entry name" value="ABC_TRANSPORTER_2"/>
    <property type="match status" value="1"/>
</dbReference>
<keyword id="KW-0067">ATP-binding</keyword>
<keyword id="KW-0547">Nucleotide-binding</keyword>
<keyword id="KW-1185">Reference proteome</keyword>
<keyword id="KW-0813">Transport</keyword>
<reference key="1">
    <citation type="journal article" date="1996" name="Science">
        <title>Complete genome sequence of the methanogenic archaeon, Methanococcus jannaschii.</title>
        <authorList>
            <person name="Bult C.J."/>
            <person name="White O."/>
            <person name="Olsen G.J."/>
            <person name="Zhou L."/>
            <person name="Fleischmann R.D."/>
            <person name="Sutton G.G."/>
            <person name="Blake J.A."/>
            <person name="FitzGerald L.M."/>
            <person name="Clayton R.A."/>
            <person name="Gocayne J.D."/>
            <person name="Kerlavage A.R."/>
            <person name="Dougherty B.A."/>
            <person name="Tomb J.-F."/>
            <person name="Adams M.D."/>
            <person name="Reich C.I."/>
            <person name="Overbeek R."/>
            <person name="Kirkness E.F."/>
            <person name="Weinstock K.G."/>
            <person name="Merrick J.M."/>
            <person name="Glodek A."/>
            <person name="Scott J.L."/>
            <person name="Geoghagen N.S.M."/>
            <person name="Weidman J.F."/>
            <person name="Fuhrmann J.L."/>
            <person name="Nguyen D."/>
            <person name="Utterback T.R."/>
            <person name="Kelley J.M."/>
            <person name="Peterson J.D."/>
            <person name="Sadow P.W."/>
            <person name="Hanna M.C."/>
            <person name="Cotton M.D."/>
            <person name="Roberts K.M."/>
            <person name="Hurst M.A."/>
            <person name="Kaine B.P."/>
            <person name="Borodovsky M."/>
            <person name="Klenk H.-P."/>
            <person name="Fraser C.M."/>
            <person name="Smith H.O."/>
            <person name="Woese C.R."/>
            <person name="Venter J.C."/>
        </authorList>
    </citation>
    <scope>NUCLEOTIDE SEQUENCE [LARGE SCALE GENOMIC DNA]</scope>
    <source>
        <strain>ATCC 43067 / DSM 2661 / JAL-1 / JCM 10045 / NBRC 100440</strain>
    </source>
</reference>
<organism>
    <name type="scientific">Methanocaldococcus jannaschii (strain ATCC 43067 / DSM 2661 / JAL-1 / JCM 10045 / NBRC 100440)</name>
    <name type="common">Methanococcus jannaschii</name>
    <dbReference type="NCBI Taxonomy" id="243232"/>
    <lineage>
        <taxon>Archaea</taxon>
        <taxon>Methanobacteriati</taxon>
        <taxon>Methanobacteriota</taxon>
        <taxon>Methanomada group</taxon>
        <taxon>Methanococci</taxon>
        <taxon>Methanococcales</taxon>
        <taxon>Methanocaldococcaceae</taxon>
        <taxon>Methanocaldococcus</taxon>
    </lineage>
</organism>
<feature type="chain" id="PRO_0000093223" description="Uncharacterized ABC transporter ATP-binding protein MJ1023">
    <location>
        <begin position="1"/>
        <end position="262"/>
    </location>
</feature>
<feature type="domain" description="ABC transporter" evidence="1">
    <location>
        <begin position="5"/>
        <end position="223"/>
    </location>
</feature>
<feature type="binding site" evidence="1">
    <location>
        <begin position="37"/>
        <end position="44"/>
    </location>
    <ligand>
        <name>ATP</name>
        <dbReference type="ChEBI" id="CHEBI:30616"/>
    </ligand>
</feature>
<protein>
    <recommendedName>
        <fullName>Uncharacterized ABC transporter ATP-binding protein MJ1023</fullName>
    </recommendedName>
</protein>
<comment type="similarity">
    <text evidence="2">Belongs to the ABC transporter superfamily.</text>
</comment>
<name>Y1023_METJA</name>
<proteinExistence type="inferred from homology"/>